<evidence type="ECO:0000255" key="1">
    <source>
        <dbReference type="HAMAP-Rule" id="MF_00693"/>
    </source>
</evidence>
<protein>
    <recommendedName>
        <fullName evidence="1">Probable transcriptional regulatory protein XCV3282</fullName>
    </recommendedName>
</protein>
<feature type="chain" id="PRO_0000257158" description="Probable transcriptional regulatory protein XCV3282">
    <location>
        <begin position="1"/>
        <end position="242"/>
    </location>
</feature>
<organism>
    <name type="scientific">Xanthomonas euvesicatoria pv. vesicatoria (strain 85-10)</name>
    <name type="common">Xanthomonas campestris pv. vesicatoria</name>
    <dbReference type="NCBI Taxonomy" id="316273"/>
    <lineage>
        <taxon>Bacteria</taxon>
        <taxon>Pseudomonadati</taxon>
        <taxon>Pseudomonadota</taxon>
        <taxon>Gammaproteobacteria</taxon>
        <taxon>Lysobacterales</taxon>
        <taxon>Lysobacteraceae</taxon>
        <taxon>Xanthomonas</taxon>
    </lineage>
</organism>
<name>Y3282_XANE5</name>
<dbReference type="EMBL" id="AM039952">
    <property type="protein sequence ID" value="CAJ25013.1"/>
    <property type="molecule type" value="Genomic_DNA"/>
</dbReference>
<dbReference type="RefSeq" id="WP_008578072.1">
    <property type="nucleotide sequence ID" value="NZ_CP017190.1"/>
</dbReference>
<dbReference type="SMR" id="Q3BQF0"/>
<dbReference type="STRING" id="456327.BJD11_06355"/>
<dbReference type="KEGG" id="xcv:XCV3282"/>
<dbReference type="eggNOG" id="COG0217">
    <property type="taxonomic scope" value="Bacteria"/>
</dbReference>
<dbReference type="HOGENOM" id="CLU_062974_2_2_6"/>
<dbReference type="Proteomes" id="UP000007069">
    <property type="component" value="Chromosome"/>
</dbReference>
<dbReference type="GO" id="GO:0005829">
    <property type="term" value="C:cytosol"/>
    <property type="evidence" value="ECO:0007669"/>
    <property type="project" value="TreeGrafter"/>
</dbReference>
<dbReference type="GO" id="GO:0003677">
    <property type="term" value="F:DNA binding"/>
    <property type="evidence" value="ECO:0007669"/>
    <property type="project" value="UniProtKB-UniRule"/>
</dbReference>
<dbReference type="GO" id="GO:0006355">
    <property type="term" value="P:regulation of DNA-templated transcription"/>
    <property type="evidence" value="ECO:0007669"/>
    <property type="project" value="UniProtKB-UniRule"/>
</dbReference>
<dbReference type="FunFam" id="1.10.10.200:FF:000007">
    <property type="entry name" value="Probable transcriptional regulatory protein AC801_15750"/>
    <property type="match status" value="1"/>
</dbReference>
<dbReference type="FunFam" id="3.30.70.980:FF:000002">
    <property type="entry name" value="Probable transcriptional regulatory protein YebC"/>
    <property type="match status" value="1"/>
</dbReference>
<dbReference type="Gene3D" id="1.10.10.200">
    <property type="match status" value="1"/>
</dbReference>
<dbReference type="Gene3D" id="3.30.70.980">
    <property type="match status" value="2"/>
</dbReference>
<dbReference type="HAMAP" id="MF_00693">
    <property type="entry name" value="Transcrip_reg_TACO1"/>
    <property type="match status" value="1"/>
</dbReference>
<dbReference type="InterPro" id="IPR017856">
    <property type="entry name" value="Integrase-like_N"/>
</dbReference>
<dbReference type="InterPro" id="IPR048300">
    <property type="entry name" value="TACO1_YebC-like_2nd/3rd_dom"/>
</dbReference>
<dbReference type="InterPro" id="IPR049083">
    <property type="entry name" value="TACO1_YebC_N"/>
</dbReference>
<dbReference type="InterPro" id="IPR002876">
    <property type="entry name" value="Transcrip_reg_TACO1-like"/>
</dbReference>
<dbReference type="InterPro" id="IPR026564">
    <property type="entry name" value="Transcrip_reg_TACO1-like_dom3"/>
</dbReference>
<dbReference type="InterPro" id="IPR029072">
    <property type="entry name" value="YebC-like"/>
</dbReference>
<dbReference type="NCBIfam" id="NF001030">
    <property type="entry name" value="PRK00110.1"/>
    <property type="match status" value="1"/>
</dbReference>
<dbReference type="NCBIfam" id="NF009044">
    <property type="entry name" value="PRK12378.1"/>
    <property type="match status" value="1"/>
</dbReference>
<dbReference type="NCBIfam" id="TIGR01033">
    <property type="entry name" value="YebC/PmpR family DNA-binding transcriptional regulator"/>
    <property type="match status" value="1"/>
</dbReference>
<dbReference type="PANTHER" id="PTHR12532:SF6">
    <property type="entry name" value="TRANSCRIPTIONAL REGULATORY PROTEIN YEBC-RELATED"/>
    <property type="match status" value="1"/>
</dbReference>
<dbReference type="PANTHER" id="PTHR12532">
    <property type="entry name" value="TRANSLATIONAL ACTIVATOR OF CYTOCHROME C OXIDASE 1"/>
    <property type="match status" value="1"/>
</dbReference>
<dbReference type="Pfam" id="PF20772">
    <property type="entry name" value="TACO1_YebC_N"/>
    <property type="match status" value="1"/>
</dbReference>
<dbReference type="Pfam" id="PF01709">
    <property type="entry name" value="Transcrip_reg"/>
    <property type="match status" value="1"/>
</dbReference>
<dbReference type="SUPFAM" id="SSF75625">
    <property type="entry name" value="YebC-like"/>
    <property type="match status" value="1"/>
</dbReference>
<reference key="1">
    <citation type="journal article" date="2005" name="J. Bacteriol.">
        <title>Insights into genome plasticity and pathogenicity of the plant pathogenic Bacterium Xanthomonas campestris pv. vesicatoria revealed by the complete genome sequence.</title>
        <authorList>
            <person name="Thieme F."/>
            <person name="Koebnik R."/>
            <person name="Bekel T."/>
            <person name="Berger C."/>
            <person name="Boch J."/>
            <person name="Buettner D."/>
            <person name="Caldana C."/>
            <person name="Gaigalat L."/>
            <person name="Goesmann A."/>
            <person name="Kay S."/>
            <person name="Kirchner O."/>
            <person name="Lanz C."/>
            <person name="Linke B."/>
            <person name="McHardy A.C."/>
            <person name="Meyer F."/>
            <person name="Mittenhuber G."/>
            <person name="Nies D.H."/>
            <person name="Niesbach-Kloesgen U."/>
            <person name="Patschkowski T."/>
            <person name="Rueckert C."/>
            <person name="Rupp O."/>
            <person name="Schneiker S."/>
            <person name="Schuster S.C."/>
            <person name="Vorhoelter F.J."/>
            <person name="Weber E."/>
            <person name="Puehler A."/>
            <person name="Bonas U."/>
            <person name="Bartels D."/>
            <person name="Kaiser O."/>
        </authorList>
    </citation>
    <scope>NUCLEOTIDE SEQUENCE [LARGE SCALE GENOMIC DNA]</scope>
    <source>
        <strain>85-10</strain>
    </source>
</reference>
<sequence>MGRGPSIEGRKNASDAKRGKMFTKIIREISVAARAGGGDPSNNPRLRTAMDKGLSSNMSKDVMERAIKKSTGELEGVEYEEVRYEGYAPGGVAVIVDCLTDNRVRTVADVRHAFSKCGGNMGTEGSVAFMFKRLGVLSFAAGIDEDTLTDAAIEAGADDVVVYPEDGAIDVLTAPDAFAQVRDALVAAGLEPAHAEITFRADNDIAVDGETAVQVRKLLDMLEDLDDVQDVYSNVDQAALGA</sequence>
<comment type="subcellular location">
    <subcellularLocation>
        <location evidence="1">Cytoplasm</location>
    </subcellularLocation>
</comment>
<comment type="similarity">
    <text evidence="1">Belongs to the TACO1 family.</text>
</comment>
<proteinExistence type="inferred from homology"/>
<keyword id="KW-0963">Cytoplasm</keyword>
<keyword id="KW-0238">DNA-binding</keyword>
<keyword id="KW-0804">Transcription</keyword>
<keyword id="KW-0805">Transcription regulation</keyword>
<gene>
    <name type="ordered locus">XCV3282</name>
</gene>
<accession>Q3BQF0</accession>